<evidence type="ECO:0000250" key="1">
    <source>
        <dbReference type="UniProtKB" id="P25526"/>
    </source>
</evidence>
<evidence type="ECO:0000305" key="2"/>
<name>ALDH_STAAS</name>
<gene>
    <name type="ordered locus">SAS2025</name>
</gene>
<dbReference type="EC" id="1.2.1.3" evidence="2"/>
<dbReference type="EMBL" id="BX571857">
    <property type="protein sequence ID" value="CAG43833.1"/>
    <property type="molecule type" value="Genomic_DNA"/>
</dbReference>
<dbReference type="RefSeq" id="WP_001206105.1">
    <property type="nucleotide sequence ID" value="NC_002953.3"/>
</dbReference>
<dbReference type="SMR" id="Q6G7I8"/>
<dbReference type="KEGG" id="sas:SAS2025"/>
<dbReference type="HOGENOM" id="CLU_005391_0_2_9"/>
<dbReference type="GO" id="GO:0004029">
    <property type="term" value="F:aldehyde dehydrogenase (NAD+) activity"/>
    <property type="evidence" value="ECO:0007669"/>
    <property type="project" value="UniProtKB-EC"/>
</dbReference>
<dbReference type="GO" id="GO:0006081">
    <property type="term" value="P:aldehyde metabolic process"/>
    <property type="evidence" value="ECO:0007669"/>
    <property type="project" value="InterPro"/>
</dbReference>
<dbReference type="CDD" id="cd07138">
    <property type="entry name" value="ALDH_CddD_SSP0762"/>
    <property type="match status" value="1"/>
</dbReference>
<dbReference type="FunFam" id="3.40.605.10:FF:000026">
    <property type="entry name" value="Aldehyde dehydrogenase, putative"/>
    <property type="match status" value="1"/>
</dbReference>
<dbReference type="FunFam" id="3.40.309.10:FF:000012">
    <property type="entry name" value="Betaine aldehyde dehydrogenase"/>
    <property type="match status" value="1"/>
</dbReference>
<dbReference type="FunFam" id="3.40.605.10:FF:000007">
    <property type="entry name" value="NAD/NADP-dependent betaine aldehyde dehydrogenase"/>
    <property type="match status" value="1"/>
</dbReference>
<dbReference type="Gene3D" id="3.40.605.10">
    <property type="entry name" value="Aldehyde Dehydrogenase, Chain A, domain 1"/>
    <property type="match status" value="1"/>
</dbReference>
<dbReference type="Gene3D" id="3.40.309.10">
    <property type="entry name" value="Aldehyde Dehydrogenase, Chain A, domain 2"/>
    <property type="match status" value="1"/>
</dbReference>
<dbReference type="InterPro" id="IPR016161">
    <property type="entry name" value="Ald_DH/histidinol_DH"/>
</dbReference>
<dbReference type="InterPro" id="IPR016163">
    <property type="entry name" value="Ald_DH_C"/>
</dbReference>
<dbReference type="InterPro" id="IPR016160">
    <property type="entry name" value="Ald_DH_CS_CYS"/>
</dbReference>
<dbReference type="InterPro" id="IPR029510">
    <property type="entry name" value="Ald_DH_CS_GLU"/>
</dbReference>
<dbReference type="InterPro" id="IPR016162">
    <property type="entry name" value="Ald_DH_N"/>
</dbReference>
<dbReference type="InterPro" id="IPR015590">
    <property type="entry name" value="Aldehyde_DH_dom"/>
</dbReference>
<dbReference type="InterPro" id="IPR012394">
    <property type="entry name" value="Aldehyde_DH_NAD(P)"/>
</dbReference>
<dbReference type="PANTHER" id="PTHR42804">
    <property type="entry name" value="ALDEHYDE DEHYDROGENASE"/>
    <property type="match status" value="1"/>
</dbReference>
<dbReference type="PANTHER" id="PTHR42804:SF1">
    <property type="entry name" value="ALDEHYDE DEHYDROGENASE-RELATED"/>
    <property type="match status" value="1"/>
</dbReference>
<dbReference type="Pfam" id="PF00171">
    <property type="entry name" value="Aldedh"/>
    <property type="match status" value="1"/>
</dbReference>
<dbReference type="PIRSF" id="PIRSF036492">
    <property type="entry name" value="ALDH"/>
    <property type="match status" value="1"/>
</dbReference>
<dbReference type="SUPFAM" id="SSF53720">
    <property type="entry name" value="ALDH-like"/>
    <property type="match status" value="1"/>
</dbReference>
<dbReference type="PROSITE" id="PS00070">
    <property type="entry name" value="ALDEHYDE_DEHYDR_CYS"/>
    <property type="match status" value="1"/>
</dbReference>
<dbReference type="PROSITE" id="PS00687">
    <property type="entry name" value="ALDEHYDE_DEHYDR_GLU"/>
    <property type="match status" value="1"/>
</dbReference>
<reference key="1">
    <citation type="journal article" date="2004" name="Proc. Natl. Acad. Sci. U.S.A.">
        <title>Complete genomes of two clinical Staphylococcus aureus strains: evidence for the rapid evolution of virulence and drug resistance.</title>
        <authorList>
            <person name="Holden M.T.G."/>
            <person name="Feil E.J."/>
            <person name="Lindsay J.A."/>
            <person name="Peacock S.J."/>
            <person name="Day N.P.J."/>
            <person name="Enright M.C."/>
            <person name="Foster T.J."/>
            <person name="Moore C.E."/>
            <person name="Hurst L."/>
            <person name="Atkin R."/>
            <person name="Barron A."/>
            <person name="Bason N."/>
            <person name="Bentley S.D."/>
            <person name="Chillingworth C."/>
            <person name="Chillingworth T."/>
            <person name="Churcher C."/>
            <person name="Clark L."/>
            <person name="Corton C."/>
            <person name="Cronin A."/>
            <person name="Doggett J."/>
            <person name="Dowd L."/>
            <person name="Feltwell T."/>
            <person name="Hance Z."/>
            <person name="Harris B."/>
            <person name="Hauser H."/>
            <person name="Holroyd S."/>
            <person name="Jagels K."/>
            <person name="James K.D."/>
            <person name="Lennard N."/>
            <person name="Line A."/>
            <person name="Mayes R."/>
            <person name="Moule S."/>
            <person name="Mungall K."/>
            <person name="Ormond D."/>
            <person name="Quail M.A."/>
            <person name="Rabbinowitsch E."/>
            <person name="Rutherford K.M."/>
            <person name="Sanders M."/>
            <person name="Sharp S."/>
            <person name="Simmonds M."/>
            <person name="Stevens K."/>
            <person name="Whitehead S."/>
            <person name="Barrell B.G."/>
            <person name="Spratt B.G."/>
            <person name="Parkhill J."/>
        </authorList>
    </citation>
    <scope>NUCLEOTIDE SEQUENCE [LARGE SCALE GENOMIC DNA]</scope>
    <source>
        <strain>MSSA476</strain>
    </source>
</reference>
<proteinExistence type="inferred from homology"/>
<keyword id="KW-0520">NAD</keyword>
<keyword id="KW-0560">Oxidoreductase</keyword>
<sequence>MRDYTKQYINGEWVESNSNETIEVINPATEEVIGKVAKGNKADVDKAVEAADNVYLEFRHTSVKERQALLDKIVKEYENRKDDIVQAITDELGAPLSLSERVHYQMGLNHFVAARDALDNYEFEERRGDDLVVKEAIGVSGLITPWNFPTNQTSLKLAAAFAAGSPVVLKPSEETPFAAVILAEIFDKVGVPKGVFNLVNGDGAGVGNPLSEHPKVRMMSFTGSGPTGSKIMEKAAKDFKKVSLELGGKSPYIVLDDVDIKEAAKATTGKVVNNTGQVCTAGTRVLVPKKIKDAFLAELKEQFSQVRVGNPREDGTQVGPIISKKQFDQVQNYINKGIEEGAELFYGGPGKPEGLEKGYFARPTIFINVDNQMTIAQEEIFGPVMSVITYNDLDEAIQIANDTKYGLAGYVIGKDKETLHKVARSIEAGTVEINEAGRKPDLPFGGYKQSGLGREWGDYGIEEFLEVKSIAGYFK</sequence>
<organism>
    <name type="scientific">Staphylococcus aureus (strain MSSA476)</name>
    <dbReference type="NCBI Taxonomy" id="282459"/>
    <lineage>
        <taxon>Bacteria</taxon>
        <taxon>Bacillati</taxon>
        <taxon>Bacillota</taxon>
        <taxon>Bacilli</taxon>
        <taxon>Bacillales</taxon>
        <taxon>Staphylococcaceae</taxon>
        <taxon>Staphylococcus</taxon>
    </lineage>
</organism>
<comment type="catalytic activity">
    <reaction evidence="2">
        <text>an aldehyde + NAD(+) + H2O = a carboxylate + NADH + 2 H(+)</text>
        <dbReference type="Rhea" id="RHEA:16185"/>
        <dbReference type="ChEBI" id="CHEBI:15377"/>
        <dbReference type="ChEBI" id="CHEBI:15378"/>
        <dbReference type="ChEBI" id="CHEBI:17478"/>
        <dbReference type="ChEBI" id="CHEBI:29067"/>
        <dbReference type="ChEBI" id="CHEBI:57540"/>
        <dbReference type="ChEBI" id="CHEBI:57945"/>
        <dbReference type="EC" id="1.2.1.3"/>
    </reaction>
</comment>
<comment type="similarity">
    <text evidence="2">Belongs to the aldehyde dehydrogenase family.</text>
</comment>
<accession>Q6G7I8</accession>
<protein>
    <recommendedName>
        <fullName evidence="2">Putative aldehyde dehydrogenase</fullName>
        <ecNumber evidence="2">1.2.1.3</ecNumber>
    </recommendedName>
</protein>
<feature type="chain" id="PRO_0000293555" description="Putative aldehyde dehydrogenase">
    <location>
        <begin position="1"/>
        <end position="475"/>
    </location>
</feature>
<feature type="active site" description="Proton acceptor" evidence="1">
    <location>
        <position position="245"/>
    </location>
</feature>
<feature type="active site" description="Nucleophile" evidence="1">
    <location>
        <position position="279"/>
    </location>
</feature>
<feature type="binding site" evidence="1">
    <location>
        <begin position="146"/>
        <end position="147"/>
    </location>
    <ligand>
        <name>NAD(+)</name>
        <dbReference type="ChEBI" id="CHEBI:57540"/>
    </ligand>
</feature>
<feature type="binding site" evidence="1">
    <location>
        <begin position="223"/>
        <end position="224"/>
    </location>
    <ligand>
        <name>NAD(+)</name>
        <dbReference type="ChEBI" id="CHEBI:57540"/>
    </ligand>
</feature>
<feature type="binding site" evidence="1">
    <location>
        <position position="246"/>
    </location>
    <ligand>
        <name>NAD(+)</name>
        <dbReference type="ChEBI" id="CHEBI:57540"/>
    </ligand>
</feature>
<feature type="binding site" evidence="1">
    <location>
        <position position="379"/>
    </location>
    <ligand>
        <name>NAD(+)</name>
        <dbReference type="ChEBI" id="CHEBI:57540"/>
    </ligand>
</feature>